<dbReference type="EMBL" id="CP000255">
    <property type="status" value="NOT_ANNOTATED_CDS"/>
    <property type="molecule type" value="Genomic_DNA"/>
</dbReference>
<dbReference type="RefSeq" id="WP_014373779.1">
    <property type="nucleotide sequence ID" value="NZ_CP027476.1"/>
</dbReference>
<dbReference type="SMR" id="P0C804"/>
<dbReference type="PHI-base" id="PHI:6668"/>
<dbReference type="Proteomes" id="UP000001939">
    <property type="component" value="Chromosome"/>
</dbReference>
<dbReference type="GO" id="GO:0031640">
    <property type="term" value="P:killing of cells of another organism"/>
    <property type="evidence" value="ECO:0007669"/>
    <property type="project" value="UniProtKB-KW"/>
</dbReference>
<dbReference type="InterPro" id="IPR031429">
    <property type="entry name" value="PSM_alpha"/>
</dbReference>
<dbReference type="InterPro" id="IPR053383">
    <property type="entry name" value="PSM_alpha_peptides"/>
</dbReference>
<dbReference type="NCBIfam" id="NF033426">
    <property type="entry name" value="PSM_alpha_3"/>
    <property type="match status" value="1"/>
</dbReference>
<dbReference type="Pfam" id="PF17063">
    <property type="entry name" value="PSMalpha"/>
    <property type="match status" value="1"/>
</dbReference>
<sequence length="22" mass="2607">MEFVAKLFKFFKDLLGKFLGNN</sequence>
<keyword id="KW-0204">Cytolysis</keyword>
<keyword id="KW-0843">Virulence</keyword>
<reference key="1">
    <citation type="journal article" date="2006" name="Lancet">
        <title>Complete genome sequence of USA300, an epidemic clone of community-acquired meticillin-resistant Staphylococcus aureus.</title>
        <authorList>
            <person name="Diep B.A."/>
            <person name="Gill S.R."/>
            <person name="Chang R.F."/>
            <person name="Phan T.H."/>
            <person name="Chen J.H."/>
            <person name="Davidson M.G."/>
            <person name="Lin F."/>
            <person name="Lin J."/>
            <person name="Carleton H.A."/>
            <person name="Mongodin E.F."/>
            <person name="Sensabaugh G.F."/>
            <person name="Perdreau-Remington F."/>
        </authorList>
    </citation>
    <scope>NUCLEOTIDE SEQUENCE [LARGE SCALE GENOMIC DNA]</scope>
    <source>
        <strain>USA300</strain>
    </source>
</reference>
<reference key="2">
    <citation type="journal article" date="2007" name="Nat. Med.">
        <title>Identification of novel cytolytic peptides as key virulence determinants for community-associated MRSA.</title>
        <authorList>
            <person name="Wang R."/>
            <person name="Braughton K.R."/>
            <person name="Kretschmer D."/>
            <person name="Bach T.-H.L."/>
            <person name="Queck S.Y."/>
            <person name="Li M."/>
            <person name="Kennedy A.D."/>
            <person name="Dorward D.W."/>
            <person name="Klebanoff S.J."/>
            <person name="Peschel A."/>
            <person name="DeLeo F.R."/>
            <person name="Otto M."/>
        </authorList>
    </citation>
    <scope>FUNCTION AS A VIRULENCE FACTOR</scope>
    <scope>IDENTIFICATION BY MASS SPECTROMETRY</scope>
    <scope>INDUCTION BY AGR</scope>
</reference>
<proteinExistence type="evidence at protein level"/>
<gene>
    <name type="primary">psmA3</name>
    <name type="ordered locus">SAUSA300_0424.2</name>
</gene>
<protein>
    <recommendedName>
        <fullName>Phenol-soluble modulin alpha 3 peptide</fullName>
    </recommendedName>
</protein>
<organism>
    <name type="scientific">Staphylococcus aureus (strain USA300)</name>
    <dbReference type="NCBI Taxonomy" id="367830"/>
    <lineage>
        <taxon>Bacteria</taxon>
        <taxon>Bacillati</taxon>
        <taxon>Bacillota</taxon>
        <taxon>Bacilli</taxon>
        <taxon>Bacillales</taxon>
        <taxon>Staphylococcaceae</taxon>
        <taxon>Staphylococcus</taxon>
    </lineage>
</organism>
<name>PSMA3_STAA3</name>
<evidence type="ECO:0000269" key="1">
    <source>
    </source>
</evidence>
<evidence type="ECO:0000305" key="2"/>
<accession>P0C804</accession>
<comment type="function">
    <text evidence="1">Peptide which can recruit, activate and subsequently lyse human neutrophils, thus eliminating the main cellular defense against infection. Stimulates the secretion of the chemotactic factor interleukin-8 (IL-8). The ensuing activation process triggers an inflammatory response in the host, thus contributing greatly to virulence. Also possesses hemolytic activity, which may contribute to the development of disease.</text>
</comment>
<comment type="induction">
    <text evidence="1">Up-regulated by agr.</text>
</comment>
<comment type="miscellaneous">
    <text>Peptide production is higher in most prevalent community-associated MRSA strains than in hospital-associated MRSA strains.</text>
</comment>
<comment type="similarity">
    <text evidence="2">Belongs to the phenol-soluble modulin alpha peptides family.</text>
</comment>
<feature type="peptide" id="PRO_0000345059" description="Phenol-soluble modulin alpha 3 peptide">
    <location>
        <begin position="1"/>
        <end position="22"/>
    </location>
</feature>